<reference key="1">
    <citation type="journal article" date="2002" name="Oncogene">
        <title>Identification of a novel stress-responsive gene Hi95 involved in regulation of cell viability.</title>
        <authorList>
            <person name="Budanov A.V."/>
            <person name="Shoshani T."/>
            <person name="Faerman A."/>
            <person name="Zelin E."/>
            <person name="Kamer I."/>
            <person name="Kalinski H."/>
            <person name="Gorodin S."/>
            <person name="Fishman A."/>
            <person name="Chajut A."/>
            <person name="Einat P."/>
            <person name="Skaliter R."/>
            <person name="Gudkov A.V."/>
            <person name="Chumakov P.M."/>
            <person name="Feinstein E."/>
        </authorList>
    </citation>
    <scope>NUCLEOTIDE SEQUENCE [MRNA]</scope>
    <scope>INDUCTION</scope>
</reference>
<reference key="2">
    <citation type="journal article" date="2001" name="Genome Res.">
        <title>Towards a catalog of human genes and proteins: sequencing and analysis of 500 novel complete protein coding human cDNAs.</title>
        <authorList>
            <person name="Wiemann S."/>
            <person name="Weil B."/>
            <person name="Wellenreuther R."/>
            <person name="Gassenhuber J."/>
            <person name="Glassl S."/>
            <person name="Ansorge W."/>
            <person name="Boecher M."/>
            <person name="Bloecker H."/>
            <person name="Bauersachs S."/>
            <person name="Blum H."/>
            <person name="Lauber J."/>
            <person name="Duesterhoeft A."/>
            <person name="Beyer A."/>
            <person name="Koehrer K."/>
            <person name="Strack N."/>
            <person name="Mewes H.-W."/>
            <person name="Ottenwaelder B."/>
            <person name="Obermaier B."/>
            <person name="Tampe J."/>
            <person name="Heubner D."/>
            <person name="Wambutt R."/>
            <person name="Korn B."/>
            <person name="Klein M."/>
            <person name="Poustka A."/>
        </authorList>
    </citation>
    <scope>NUCLEOTIDE SEQUENCE [LARGE SCALE MRNA]</scope>
    <source>
        <tissue>Amygdala</tissue>
    </source>
</reference>
<reference key="3">
    <citation type="journal article" date="2004" name="Nat. Genet.">
        <title>Complete sequencing and characterization of 21,243 full-length human cDNAs.</title>
        <authorList>
            <person name="Ota T."/>
            <person name="Suzuki Y."/>
            <person name="Nishikawa T."/>
            <person name="Otsuki T."/>
            <person name="Sugiyama T."/>
            <person name="Irie R."/>
            <person name="Wakamatsu A."/>
            <person name="Hayashi K."/>
            <person name="Sato H."/>
            <person name="Nagai K."/>
            <person name="Kimura K."/>
            <person name="Makita H."/>
            <person name="Sekine M."/>
            <person name="Obayashi M."/>
            <person name="Nishi T."/>
            <person name="Shibahara T."/>
            <person name="Tanaka T."/>
            <person name="Ishii S."/>
            <person name="Yamamoto J."/>
            <person name="Saito K."/>
            <person name="Kawai Y."/>
            <person name="Isono Y."/>
            <person name="Nakamura Y."/>
            <person name="Nagahari K."/>
            <person name="Murakami K."/>
            <person name="Yasuda T."/>
            <person name="Iwayanagi T."/>
            <person name="Wagatsuma M."/>
            <person name="Shiratori A."/>
            <person name="Sudo H."/>
            <person name="Hosoiri T."/>
            <person name="Kaku Y."/>
            <person name="Kodaira H."/>
            <person name="Kondo H."/>
            <person name="Sugawara M."/>
            <person name="Takahashi M."/>
            <person name="Kanda K."/>
            <person name="Yokoi T."/>
            <person name="Furuya T."/>
            <person name="Kikkawa E."/>
            <person name="Omura Y."/>
            <person name="Abe K."/>
            <person name="Kamihara K."/>
            <person name="Katsuta N."/>
            <person name="Sato K."/>
            <person name="Tanikawa M."/>
            <person name="Yamazaki M."/>
            <person name="Ninomiya K."/>
            <person name="Ishibashi T."/>
            <person name="Yamashita H."/>
            <person name="Murakawa K."/>
            <person name="Fujimori K."/>
            <person name="Tanai H."/>
            <person name="Kimata M."/>
            <person name="Watanabe M."/>
            <person name="Hiraoka S."/>
            <person name="Chiba Y."/>
            <person name="Ishida S."/>
            <person name="Ono Y."/>
            <person name="Takiguchi S."/>
            <person name="Watanabe S."/>
            <person name="Yosida M."/>
            <person name="Hotuta T."/>
            <person name="Kusano J."/>
            <person name="Kanehori K."/>
            <person name="Takahashi-Fujii A."/>
            <person name="Hara H."/>
            <person name="Tanase T.-O."/>
            <person name="Nomura Y."/>
            <person name="Togiya S."/>
            <person name="Komai F."/>
            <person name="Hara R."/>
            <person name="Takeuchi K."/>
            <person name="Arita M."/>
            <person name="Imose N."/>
            <person name="Musashino K."/>
            <person name="Yuuki H."/>
            <person name="Oshima A."/>
            <person name="Sasaki N."/>
            <person name="Aotsuka S."/>
            <person name="Yoshikawa Y."/>
            <person name="Matsunawa H."/>
            <person name="Ichihara T."/>
            <person name="Shiohata N."/>
            <person name="Sano S."/>
            <person name="Moriya S."/>
            <person name="Momiyama H."/>
            <person name="Satoh N."/>
            <person name="Takami S."/>
            <person name="Terashima Y."/>
            <person name="Suzuki O."/>
            <person name="Nakagawa S."/>
            <person name="Senoh A."/>
            <person name="Mizoguchi H."/>
            <person name="Goto Y."/>
            <person name="Shimizu F."/>
            <person name="Wakebe H."/>
            <person name="Hishigaki H."/>
            <person name="Watanabe T."/>
            <person name="Sugiyama A."/>
            <person name="Takemoto M."/>
            <person name="Kawakami B."/>
            <person name="Yamazaki M."/>
            <person name="Watanabe K."/>
            <person name="Kumagai A."/>
            <person name="Itakura S."/>
            <person name="Fukuzumi Y."/>
            <person name="Fujimori Y."/>
            <person name="Komiyama M."/>
            <person name="Tashiro H."/>
            <person name="Tanigami A."/>
            <person name="Fujiwara T."/>
            <person name="Ono T."/>
            <person name="Yamada K."/>
            <person name="Fujii Y."/>
            <person name="Ozaki K."/>
            <person name="Hirao M."/>
            <person name="Ohmori Y."/>
            <person name="Kawabata A."/>
            <person name="Hikiji T."/>
            <person name="Kobatake N."/>
            <person name="Inagaki H."/>
            <person name="Ikema Y."/>
            <person name="Okamoto S."/>
            <person name="Okitani R."/>
            <person name="Kawakami T."/>
            <person name="Noguchi S."/>
            <person name="Itoh T."/>
            <person name="Shigeta K."/>
            <person name="Senba T."/>
            <person name="Matsumura K."/>
            <person name="Nakajima Y."/>
            <person name="Mizuno T."/>
            <person name="Morinaga M."/>
            <person name="Sasaki M."/>
            <person name="Togashi T."/>
            <person name="Oyama M."/>
            <person name="Hata H."/>
            <person name="Watanabe M."/>
            <person name="Komatsu T."/>
            <person name="Mizushima-Sugano J."/>
            <person name="Satoh T."/>
            <person name="Shirai Y."/>
            <person name="Takahashi Y."/>
            <person name="Nakagawa K."/>
            <person name="Okumura K."/>
            <person name="Nagase T."/>
            <person name="Nomura N."/>
            <person name="Kikuchi H."/>
            <person name="Masuho Y."/>
            <person name="Yamashita R."/>
            <person name="Nakai K."/>
            <person name="Yada T."/>
            <person name="Nakamura Y."/>
            <person name="Ohara O."/>
            <person name="Isogai T."/>
            <person name="Sugano S."/>
        </authorList>
    </citation>
    <scope>NUCLEOTIDE SEQUENCE [LARGE SCALE MRNA]</scope>
    <source>
        <tissue>Hepatoma</tissue>
        <tissue>Testis</tissue>
    </source>
</reference>
<reference key="4">
    <citation type="journal article" date="2006" name="Nature">
        <title>The DNA sequence and biological annotation of human chromosome 1.</title>
        <authorList>
            <person name="Gregory S.G."/>
            <person name="Barlow K.F."/>
            <person name="McLay K.E."/>
            <person name="Kaul R."/>
            <person name="Swarbreck D."/>
            <person name="Dunham A."/>
            <person name="Scott C.E."/>
            <person name="Howe K.L."/>
            <person name="Woodfine K."/>
            <person name="Spencer C.C.A."/>
            <person name="Jones M.C."/>
            <person name="Gillson C."/>
            <person name="Searle S."/>
            <person name="Zhou Y."/>
            <person name="Kokocinski F."/>
            <person name="McDonald L."/>
            <person name="Evans R."/>
            <person name="Phillips K."/>
            <person name="Atkinson A."/>
            <person name="Cooper R."/>
            <person name="Jones C."/>
            <person name="Hall R.E."/>
            <person name="Andrews T.D."/>
            <person name="Lloyd C."/>
            <person name="Ainscough R."/>
            <person name="Almeida J.P."/>
            <person name="Ambrose K.D."/>
            <person name="Anderson F."/>
            <person name="Andrew R.W."/>
            <person name="Ashwell R.I.S."/>
            <person name="Aubin K."/>
            <person name="Babbage A.K."/>
            <person name="Bagguley C.L."/>
            <person name="Bailey J."/>
            <person name="Beasley H."/>
            <person name="Bethel G."/>
            <person name="Bird C.P."/>
            <person name="Bray-Allen S."/>
            <person name="Brown J.Y."/>
            <person name="Brown A.J."/>
            <person name="Buckley D."/>
            <person name="Burton J."/>
            <person name="Bye J."/>
            <person name="Carder C."/>
            <person name="Chapman J.C."/>
            <person name="Clark S.Y."/>
            <person name="Clarke G."/>
            <person name="Clee C."/>
            <person name="Cobley V."/>
            <person name="Collier R.E."/>
            <person name="Corby N."/>
            <person name="Coville G.J."/>
            <person name="Davies J."/>
            <person name="Deadman R."/>
            <person name="Dunn M."/>
            <person name="Earthrowl M."/>
            <person name="Ellington A.G."/>
            <person name="Errington H."/>
            <person name="Frankish A."/>
            <person name="Frankland J."/>
            <person name="French L."/>
            <person name="Garner P."/>
            <person name="Garnett J."/>
            <person name="Gay L."/>
            <person name="Ghori M.R.J."/>
            <person name="Gibson R."/>
            <person name="Gilby L.M."/>
            <person name="Gillett W."/>
            <person name="Glithero R.J."/>
            <person name="Grafham D.V."/>
            <person name="Griffiths C."/>
            <person name="Griffiths-Jones S."/>
            <person name="Grocock R."/>
            <person name="Hammond S."/>
            <person name="Harrison E.S.I."/>
            <person name="Hart E."/>
            <person name="Haugen E."/>
            <person name="Heath P.D."/>
            <person name="Holmes S."/>
            <person name="Holt K."/>
            <person name="Howden P.J."/>
            <person name="Hunt A.R."/>
            <person name="Hunt S.E."/>
            <person name="Hunter G."/>
            <person name="Isherwood J."/>
            <person name="James R."/>
            <person name="Johnson C."/>
            <person name="Johnson D."/>
            <person name="Joy A."/>
            <person name="Kay M."/>
            <person name="Kershaw J.K."/>
            <person name="Kibukawa M."/>
            <person name="Kimberley A.M."/>
            <person name="King A."/>
            <person name="Knights A.J."/>
            <person name="Lad H."/>
            <person name="Laird G."/>
            <person name="Lawlor S."/>
            <person name="Leongamornlert D.A."/>
            <person name="Lloyd D.M."/>
            <person name="Loveland J."/>
            <person name="Lovell J."/>
            <person name="Lush M.J."/>
            <person name="Lyne R."/>
            <person name="Martin S."/>
            <person name="Mashreghi-Mohammadi M."/>
            <person name="Matthews L."/>
            <person name="Matthews N.S.W."/>
            <person name="McLaren S."/>
            <person name="Milne S."/>
            <person name="Mistry S."/>
            <person name="Moore M.J.F."/>
            <person name="Nickerson T."/>
            <person name="O'Dell C.N."/>
            <person name="Oliver K."/>
            <person name="Palmeiri A."/>
            <person name="Palmer S.A."/>
            <person name="Parker A."/>
            <person name="Patel D."/>
            <person name="Pearce A.V."/>
            <person name="Peck A.I."/>
            <person name="Pelan S."/>
            <person name="Phelps K."/>
            <person name="Phillimore B.J."/>
            <person name="Plumb R."/>
            <person name="Rajan J."/>
            <person name="Raymond C."/>
            <person name="Rouse G."/>
            <person name="Saenphimmachak C."/>
            <person name="Sehra H.K."/>
            <person name="Sheridan E."/>
            <person name="Shownkeen R."/>
            <person name="Sims S."/>
            <person name="Skuce C.D."/>
            <person name="Smith M."/>
            <person name="Steward C."/>
            <person name="Subramanian S."/>
            <person name="Sycamore N."/>
            <person name="Tracey A."/>
            <person name="Tromans A."/>
            <person name="Van Helmond Z."/>
            <person name="Wall M."/>
            <person name="Wallis J.M."/>
            <person name="White S."/>
            <person name="Whitehead S.L."/>
            <person name="Wilkinson J.E."/>
            <person name="Willey D.L."/>
            <person name="Williams H."/>
            <person name="Wilming L."/>
            <person name="Wray P.W."/>
            <person name="Wu Z."/>
            <person name="Coulson A."/>
            <person name="Vaudin M."/>
            <person name="Sulston J.E."/>
            <person name="Durbin R.M."/>
            <person name="Hubbard T."/>
            <person name="Wooster R."/>
            <person name="Dunham I."/>
            <person name="Carter N.P."/>
            <person name="McVean G."/>
            <person name="Ross M.T."/>
            <person name="Harrow J."/>
            <person name="Olson M.V."/>
            <person name="Beck S."/>
            <person name="Rogers J."/>
            <person name="Bentley D.R."/>
        </authorList>
    </citation>
    <scope>NUCLEOTIDE SEQUENCE [LARGE SCALE GENOMIC DNA]</scope>
</reference>
<reference key="5">
    <citation type="submission" date="2005-09" db="EMBL/GenBank/DDBJ databases">
        <authorList>
            <person name="Mural R.J."/>
            <person name="Istrail S."/>
            <person name="Sutton G.G."/>
            <person name="Florea L."/>
            <person name="Halpern A.L."/>
            <person name="Mobarry C.M."/>
            <person name="Lippert R."/>
            <person name="Walenz B."/>
            <person name="Shatkay H."/>
            <person name="Dew I."/>
            <person name="Miller J.R."/>
            <person name="Flanigan M.J."/>
            <person name="Edwards N.J."/>
            <person name="Bolanos R."/>
            <person name="Fasulo D."/>
            <person name="Halldorsson B.V."/>
            <person name="Hannenhalli S."/>
            <person name="Turner R."/>
            <person name="Yooseph S."/>
            <person name="Lu F."/>
            <person name="Nusskern D.R."/>
            <person name="Shue B.C."/>
            <person name="Zheng X.H."/>
            <person name="Zhong F."/>
            <person name="Delcher A.L."/>
            <person name="Huson D.H."/>
            <person name="Kravitz S.A."/>
            <person name="Mouchard L."/>
            <person name="Reinert K."/>
            <person name="Remington K.A."/>
            <person name="Clark A.G."/>
            <person name="Waterman M.S."/>
            <person name="Eichler E.E."/>
            <person name="Adams M.D."/>
            <person name="Hunkapiller M.W."/>
            <person name="Myers E.W."/>
            <person name="Venter J.C."/>
        </authorList>
    </citation>
    <scope>NUCLEOTIDE SEQUENCE [LARGE SCALE GENOMIC DNA]</scope>
</reference>
<reference key="6">
    <citation type="journal article" date="2004" name="Genome Res.">
        <title>The status, quality, and expansion of the NIH full-length cDNA project: the Mammalian Gene Collection (MGC).</title>
        <authorList>
            <consortium name="The MGC Project Team"/>
        </authorList>
    </citation>
    <scope>NUCLEOTIDE SEQUENCE [LARGE SCALE MRNA]</scope>
    <source>
        <tissue>Brain</tissue>
        <tissue>Muscle</tissue>
    </source>
</reference>
<reference key="7">
    <citation type="journal article" date="2003" name="Hum. Genet.">
        <title>PA26 is a candidate gene for heterotaxia in humans: identification of a novel PA26-related gene family in human and mouse.</title>
        <authorList>
            <person name="Peeters H."/>
            <person name="Debeer P."/>
            <person name="Bairoch A."/>
            <person name="Wilquet V."/>
            <person name="Huysmans C."/>
            <person name="Parthoens E."/>
            <person name="Fryns J.-P."/>
            <person name="Gewillig M."/>
            <person name="Nakamura Y."/>
            <person name="Niikawa N."/>
            <person name="Van De Ven W."/>
            <person name="Devriendt K."/>
        </authorList>
    </citation>
    <scope>TISSUE SPECIFICITY</scope>
</reference>
<reference key="8">
    <citation type="journal article" date="2004" name="Science">
        <title>Regeneration of peroxiredoxins by p53-regulated sestrins, homologs of bacterial AhpD.</title>
        <authorList>
            <person name="Budanov A.V."/>
            <person name="Sablina A.A."/>
            <person name="Feinstein E."/>
            <person name="Koonin E.V."/>
            <person name="Chumakov P.M."/>
        </authorList>
    </citation>
    <scope>FUNCTION</scope>
    <scope>INTERACTION WITH PRDX1</scope>
    <scope>SUBCELLULAR LOCATION</scope>
    <scope>MUTAGENESIS OF CYS-125; CYS-314; CYS-399 AND CYS-430</scope>
</reference>
<reference key="9">
    <citation type="journal article" date="2008" name="Cell">
        <title>p53 target genes sestrin1 and sestrin2 connect genotoxic stress and mTOR signaling.</title>
        <authorList>
            <person name="Budanov A.V."/>
            <person name="Karin M."/>
        </authorList>
    </citation>
    <scope>FUNCTION</scope>
    <scope>INTERACTION WITH TSC1; TSC2 AND AMPK</scope>
    <scope>MUTAGENESIS OF CYS-125</scope>
</reference>
<reference key="10">
    <citation type="journal article" date="2009" name="Antioxid. Redox Signal.">
        <title>Sestrin 2 is not a reductase for cysteine sulfinic acid of peroxiredoxins.</title>
        <authorList>
            <person name="Woo H.A."/>
            <person name="Bae S.H."/>
            <person name="Park S."/>
            <person name="Rhee S.G."/>
        </authorList>
    </citation>
    <scope>FUNCTION</scope>
</reference>
<reference key="11">
    <citation type="journal article" date="2011" name="BMC Syst. Biol.">
        <title>Initial characterization of the human central proteome.</title>
        <authorList>
            <person name="Burkard T.R."/>
            <person name="Planyavsky M."/>
            <person name="Kaupe I."/>
            <person name="Breitwieser F.P."/>
            <person name="Buerckstuemmer T."/>
            <person name="Bennett K.L."/>
            <person name="Superti-Furga G."/>
            <person name="Colinge J."/>
        </authorList>
    </citation>
    <scope>IDENTIFICATION BY MASS SPECTROMETRY [LARGE SCALE ANALYSIS]</scope>
</reference>
<reference key="12">
    <citation type="journal article" date="2012" name="Proc. Natl. Acad. Sci. U.S.A.">
        <title>N-terminal acetylome analyses and functional insights of the N-terminal acetyltransferase NatB.</title>
        <authorList>
            <person name="Van Damme P."/>
            <person name="Lasa M."/>
            <person name="Polevoda B."/>
            <person name="Gazquez C."/>
            <person name="Elosegui-Artola A."/>
            <person name="Kim D.S."/>
            <person name="De Juan-Pardo E."/>
            <person name="Demeyer K."/>
            <person name="Hole K."/>
            <person name="Larrea E."/>
            <person name="Timmerman E."/>
            <person name="Prieto J."/>
            <person name="Arnesen T."/>
            <person name="Sherman F."/>
            <person name="Gevaert K."/>
            <person name="Aldabe R."/>
        </authorList>
    </citation>
    <scope>ACETYLATION [LARGE SCALE ANALYSIS] AT MET-1</scope>
    <scope>IDENTIFICATION BY MASS SPECTROMETRY [LARGE SCALE ANALYSIS]</scope>
</reference>
<reference key="13">
    <citation type="journal article" date="2013" name="Cell Metab.">
        <title>Sestrins activate Nrf2 by promoting p62-dependent autophagic degradation of Keap1 and prevent oxidative liver damage.</title>
        <authorList>
            <person name="Bae S.H."/>
            <person name="Sung S.H."/>
            <person name="Oh S.Y."/>
            <person name="Lim J.M."/>
            <person name="Lee S.K."/>
            <person name="Park Y.N."/>
            <person name="Lee H.E."/>
            <person name="Kang D."/>
            <person name="Rhee S.G."/>
        </authorList>
    </citation>
    <scope>FUNCTION</scope>
    <scope>INTERACTION WITH KEAP1; RBX1 AND SQSTM1</scope>
</reference>
<reference key="14">
    <citation type="journal article" date="2013" name="J. Proteome Res.">
        <title>Toward a comprehensive characterization of a human cancer cell phosphoproteome.</title>
        <authorList>
            <person name="Zhou H."/>
            <person name="Di Palma S."/>
            <person name="Preisinger C."/>
            <person name="Peng M."/>
            <person name="Polat A.N."/>
            <person name="Heck A.J."/>
            <person name="Mohammed S."/>
        </authorList>
    </citation>
    <scope>PHOSPHORYLATION [LARGE SCALE ANALYSIS] AT SER-249</scope>
    <scope>IDENTIFICATION BY MASS SPECTROMETRY [LARGE SCALE ANALYSIS]</scope>
    <source>
        <tissue>Erythroleukemia</tissue>
    </source>
</reference>
<reference key="15">
    <citation type="journal article" date="2014" name="Cell">
        <title>Sestrins function as guanine nucleotide dissociation inhibitors for Rag GTPases to control mTORC1 signaling.</title>
        <authorList>
            <person name="Peng M."/>
            <person name="Yin N."/>
            <person name="Li M.O."/>
        </authorList>
    </citation>
    <scope>INTERACTION WITH RRAGA; RRAGB; RRAGC AND RRAGD</scope>
</reference>
<reference key="16">
    <citation type="journal article" date="2014" name="Cell Rep.">
        <title>The Sestrins interact with GATOR2 to negatively regulate the amino-acid-sensing pathway upstream of mTORC1.</title>
        <authorList>
            <person name="Chantranupong L."/>
            <person name="Wolfson R.L."/>
            <person name="Orozco J.M."/>
            <person name="Saxton R.A."/>
            <person name="Scaria S.M."/>
            <person name="Bar-Peled L."/>
            <person name="Spooner E."/>
            <person name="Isasa M."/>
            <person name="Gygi S.P."/>
            <person name="Sabatini D.M."/>
        </authorList>
    </citation>
    <scope>FUNCTION</scope>
    <scope>INTERACTION WITH GATOR2 COMPLEX</scope>
</reference>
<reference key="17">
    <citation type="journal article" date="2014" name="Cell Rep.">
        <title>Sestrins inhibit mTORC1 kinase activation through the GATOR complex.</title>
        <authorList>
            <person name="Parmigiani A."/>
            <person name="Nourbakhsh A."/>
            <person name="Ding B."/>
            <person name="Wang W."/>
            <person name="Kim Y.C."/>
            <person name="Akopiants K."/>
            <person name="Guan K.L."/>
            <person name="Karin M."/>
            <person name="Budanov A.V."/>
        </authorList>
    </citation>
    <scope>FUNCTION</scope>
    <scope>INTERACTION WITH GATOR2 COMPLEX</scope>
</reference>
<reference key="18">
    <citation type="journal article" date="2014" name="FEBS J.">
        <title>Sestrin2 promotes Unc-51-like kinase 1 mediated phosphorylation of p62/sequestosome-1.</title>
        <authorList>
            <person name="Ro S.H."/>
            <person name="Semple I.A."/>
            <person name="Park H."/>
            <person name="Park H."/>
            <person name="Park H.W."/>
            <person name="Kim M."/>
            <person name="Kim J.S."/>
            <person name="Lee J.H."/>
        </authorList>
    </citation>
    <scope>INTERACTION WITH SQSTM1 AND ULK1</scope>
    <scope>PHOSPHORYLATION BY ULK1</scope>
</reference>
<reference key="19">
    <citation type="journal article" date="2014" name="J. Proteomics">
        <title>An enzyme assisted RP-RPLC approach for in-depth analysis of human liver phosphoproteome.</title>
        <authorList>
            <person name="Bian Y."/>
            <person name="Song C."/>
            <person name="Cheng K."/>
            <person name="Dong M."/>
            <person name="Wang F."/>
            <person name="Huang J."/>
            <person name="Sun D."/>
            <person name="Wang L."/>
            <person name="Ye M."/>
            <person name="Zou H."/>
        </authorList>
    </citation>
    <scope>PHOSPHORYLATION [LARGE SCALE ANALYSIS] AT SER-249</scope>
    <scope>IDENTIFICATION BY MASS SPECTROMETRY [LARGE SCALE ANALYSIS]</scope>
    <source>
        <tissue>Liver</tissue>
    </source>
</reference>
<reference key="20">
    <citation type="journal article" date="2014" name="Nat. Commun.">
        <title>Hepatoprotective role of Sestrin2 against chronic ER stress.</title>
        <authorList>
            <person name="Park H.W."/>
            <person name="Park H."/>
            <person name="Ro S.H."/>
            <person name="Jang I."/>
            <person name="Semple I.A."/>
            <person name="Kim D.N."/>
            <person name="Kim M."/>
            <person name="Nam M."/>
            <person name="Zhang D."/>
            <person name="Yin L."/>
            <person name="Lee J.H."/>
        </authorList>
    </citation>
    <scope>FUNCTION</scope>
    <scope>INDUCTION</scope>
</reference>
<reference key="21">
    <citation type="journal article" date="2016" name="Science">
        <title>Sestrin2 is a leucine sensor for the mTORC1 pathway.</title>
        <authorList>
            <person name="Wolfson R.L."/>
            <person name="Chantranupong L."/>
            <person name="Saxton R.A."/>
            <person name="Shen K."/>
            <person name="Scaria S.M."/>
            <person name="Cantor J.R."/>
            <person name="Sabatini D.M."/>
        </authorList>
    </citation>
    <scope>FUNCTION</scope>
    <scope>INTERACTION WITH GATOR2 COMPLEX</scope>
    <scope>LEUCINE-BINDING</scope>
    <scope>MUTAGENESIS OF SER-190; LEU-261 AND GLU-451</scope>
</reference>
<reference key="22">
    <citation type="journal article" date="2019" name="J. Biol. Chem.">
        <title>The RING-type E3 ligase RNF186 ubiquitinates Sestrin-2 and thereby controls nutrient sensing.</title>
        <authorList>
            <person name="Lear T.B."/>
            <person name="Lockwood K.C."/>
            <person name="Ouyang Y."/>
            <person name="Evankovich J.W."/>
            <person name="Larsen M.B."/>
            <person name="Lin B."/>
            <person name="Liu Y."/>
            <person name="Chen B.B."/>
        </authorList>
    </citation>
    <scope>FUNCTION</scope>
    <scope>UBIQUITINATION BY RNF186</scope>
    <scope>MUTAGENESIS OF LYS-13</scope>
</reference>
<reference key="23">
    <citation type="journal article" date="2022" name="Mol. Cell">
        <title>E3 ligase RNF167 and deubiquitinase STAMBPL1 modulate mTOR and cancer progression.</title>
        <authorList>
            <person name="Wang D."/>
            <person name="Xu C."/>
            <person name="Yang W."/>
            <person name="Chen J."/>
            <person name="Ou Y."/>
            <person name="Guan Y."/>
            <person name="Guan J."/>
            <person name="Liu Y."/>
        </authorList>
    </citation>
    <scope>FUNCTION</scope>
    <scope>INTERACTION WITH GATOR2 COMPLEX</scope>
    <scope>UBIQUITINATION AT LYS-175</scope>
    <scope>MUTAGENESIS OF LYS-175; LEU-261; ARG-390 AND 406-ASP-ASP-407</scope>
</reference>
<reference key="24">
    <citation type="journal article" date="2022" name="Nature">
        <title>Structure of the nutrient-sensing hub GATOR2.</title>
        <authorList>
            <person name="Valenstein M.L."/>
            <person name="Rogala K.B."/>
            <person name="Lalgudi P.V."/>
            <person name="Brignole E.J."/>
            <person name="Gu X."/>
            <person name="Saxton R.A."/>
            <person name="Chantranupong L."/>
            <person name="Kolibius J."/>
            <person name="Quast J.P."/>
            <person name="Sabatini D.M."/>
        </authorList>
    </citation>
    <scope>FUNCTION</scope>
    <scope>INTERACTION WITH WDR24 AND SEH1L</scope>
</reference>
<reference key="25">
    <citation type="journal article" date="2023" name="Mol. Cell">
        <title>Ring domains are essential for GATOR2-dependent mTORC1 activation.</title>
        <authorList>
            <person name="Jiang C."/>
            <person name="Dai X."/>
            <person name="He S."/>
            <person name="Zhou H."/>
            <person name="Fang L."/>
            <person name="Guo J."/>
            <person name="Liu S."/>
            <person name="Zhang T."/>
            <person name="Pan W."/>
            <person name="Yu H."/>
            <person name="Fu T."/>
            <person name="Li D."/>
            <person name="Inuzuka H."/>
            <person name="Wang P."/>
            <person name="Xiao J."/>
            <person name="Wei W."/>
        </authorList>
    </citation>
    <scope>FUNCTION</scope>
    <scope>INTERACTION WITH WDR24</scope>
    <scope>MUTAGENESIS OF SER-190 AND LEU-261</scope>
</reference>
<reference key="26">
    <citation type="journal article" date="2015" name="Nat. Commun.">
        <title>Janus-faced Sestrin2 controls ROS and mTOR signalling through two separate functional domains.</title>
        <authorList>
            <person name="Kim H."/>
            <person name="An S."/>
            <person name="Ro S.H."/>
            <person name="Teixeira F."/>
            <person name="Jin Park G."/>
            <person name="Kim C."/>
            <person name="Cho C.S."/>
            <person name="Kim J.S."/>
            <person name="Jakob U."/>
            <person name="Lee J.H."/>
            <person name="Cho U.S."/>
        </authorList>
    </citation>
    <scope>X-RAY CRYSTALLOGRAPHY (3.50 ANGSTROMS)</scope>
    <scope>FUNCTION</scope>
    <scope>CATALYTIC ACTIVITY</scope>
    <scope>DOMAIN</scope>
    <scope>ACTIVE SITE</scope>
    <scope>MUTAGENESIS OF PRO-87; HIS-113; CYS-125; TYR-127; LEU-128; HIS-132; CYS-204; CYS-214; VAL-258; GLU-259; LEU-261; 262-MET--ARG-264; ARG-264; 336-THR-PHE-337; 340-GLN-ASP-341; LEU-373; ASN-376; ASP-385; SER-387; CYS-399; ASP-406; ASP-407; ASP-409; GLY-411; GLN-415; ARG-419; LYS-422; LYS-426 AND CYS-430</scope>
</reference>
<reference key="27">
    <citation type="journal article" date="2016" name="Science">
        <title>Structural basis for leucine sensing by the Sestrin2-mTORC1 pathway.</title>
        <authorList>
            <person name="Saxton R.A."/>
            <person name="Knockenhauer K.E."/>
            <person name="Wolfson R.L."/>
            <person name="Chantranupong L."/>
            <person name="Pacold M.E."/>
            <person name="Wang T."/>
            <person name="Schwartz T.U."/>
            <person name="Sabatini D.M."/>
        </authorList>
    </citation>
    <scope>X-RAY CRYSTALLOGRAPHY (2.70 ANGSTROMS) IN COMPLEX WITH LEUCINE</scope>
    <scope>FUNCTION</scope>
    <scope>INTERACTION WITH GATOR2 COMPLEX</scope>
    <scope>REGION</scope>
    <scope>MUTAGENESIS OF HIS-86; THR-374; TYR-375; THR-386; ARG-390; 406-ASP-ASP-407; TRP-444 AND GLU-451</scope>
</reference>
<sequence length="480" mass="54494">MIVADSECRAELKDYLRFAPGGVGDSGPGEEQRESRARRGPRGPSAFIPVEEVLREGAESLEQHLGLEALMSSGRVDNLAVVMGLHPDYFTSFWRLHYLLLHTDGPLASSWRHYIAIMAAARHQCSYLVGSHMAEFLQTGGDPEWLLGLHRAPEKLRKLSEINKLLAHRPWLITKEHIQALLKTGEHTWSLAELIQALVLLTHCHSLSSFVFGCGILPEGDADGSPAPQAPTPPSEQSSPPSRDPLNNSGGFESARDVEALMERMQQLQESLLRDEGTSQEEMESRFELEKSESLLVTPSADILEPSPHPDMLCFVEDPTFGYEDFTRRGAQAPPTFRAQDYTWEDHGYSLIQRLYPEGGQLLDEKFQAAYSLTYNTIAMHSGVDTSVLRRAIWNYIHCVFGIRYDDYDYGEVNQLLERNLKVYIKTVACYPEKTTRRMYNLFWRHFRHSEKVHVNLLLLEARMQAALLYALRAITRYMT</sequence>
<name>SESN2_HUMAN</name>
<accession>P58004</accession>
<accession>Q5T7D0</accession>
<accession>Q96SI5</accession>
<feature type="chain" id="PRO_0000221181" description="Sestrin-2">
    <location>
        <begin position="1"/>
        <end position="480"/>
    </location>
</feature>
<feature type="region of interest" description="Disordered" evidence="2">
    <location>
        <begin position="20"/>
        <end position="45"/>
    </location>
</feature>
<feature type="region of interest" description="N-terminal domain; mediates the alkylhydroperoxide reductase activity" evidence="16">
    <location>
        <begin position="66"/>
        <end position="239"/>
    </location>
</feature>
<feature type="region of interest" description="Disordered" evidence="2">
    <location>
        <begin position="222"/>
        <end position="252"/>
    </location>
</feature>
<feature type="region of interest" description="Disordered" evidence="2">
    <location>
        <begin position="272"/>
        <end position="291"/>
    </location>
</feature>
<feature type="region of interest" description="C-terminal domain; mediates TORC1 regulation" evidence="16">
    <location>
        <begin position="308"/>
        <end position="480"/>
    </location>
</feature>
<feature type="active site" description="Cysteine sulfenic acid (-SOH) intermediate" evidence="24">
    <location>
        <position position="125"/>
    </location>
</feature>
<feature type="binding site" evidence="15 26">
    <location>
        <begin position="374"/>
        <end position="377"/>
    </location>
    <ligand>
        <name>L-leucine</name>
        <dbReference type="ChEBI" id="CHEBI:57427"/>
    </ligand>
</feature>
<feature type="binding site" evidence="15 26">
    <location>
        <position position="386"/>
    </location>
    <ligand>
        <name>L-leucine</name>
        <dbReference type="ChEBI" id="CHEBI:57427"/>
    </ligand>
</feature>
<feature type="binding site" evidence="15 26">
    <location>
        <position position="451"/>
    </location>
    <ligand>
        <name>L-leucine</name>
        <dbReference type="ChEBI" id="CHEBI:57427"/>
    </ligand>
</feature>
<feature type="modified residue" description="N-acetylmethionine" evidence="27">
    <location>
        <position position="1"/>
    </location>
</feature>
<feature type="modified residue" description="Phosphoserine" evidence="28 29">
    <location>
        <position position="249"/>
    </location>
</feature>
<feature type="cross-link" description="Glycyl lysine isopeptide (Lys-Gly) (interchain with G-Cter in ubiquitin)" evidence="18">
    <location>
        <position position="175"/>
    </location>
</feature>
<feature type="sequence variant" id="VAR_022101" description="In dbSNP:rs2274848.">
    <original>T</original>
    <variation>A</variation>
    <location>
        <position position="320"/>
    </location>
</feature>
<feature type="mutagenesis site" description="About two-fold prolonged half-life in cycloheximide/CHX time course." evidence="15">
    <original>K</original>
    <variation>A</variation>
    <location>
        <position position="13"/>
    </location>
</feature>
<feature type="mutagenesis site" description="Loss of leucine-binding." evidence="15">
    <original>H</original>
    <variation>A</variation>
    <location>
        <position position="86"/>
    </location>
</feature>
<feature type="mutagenesis site" description="No effect on the ability to inhibit the TORC1 signaling pathway." evidence="16">
    <original>P</original>
    <variation>S</variation>
    <location>
        <position position="87"/>
    </location>
</feature>
<feature type="mutagenesis site" description="No effect on the ability to inhibit the TORC1 signaling pathway; when associated with C-128." evidence="16">
    <original>H</original>
    <variation>E</variation>
    <location>
        <position position="113"/>
    </location>
</feature>
<feature type="mutagenesis site" description="Decreased alkylhydroperoxide reductase activity and loss of the ability to decrease intracellular reactive oxygen species. No effect on interaction with the GATOR2 complex. No effect on inhibition of TOR signaling." evidence="5 6 16">
    <original>C</original>
    <variation>S</variation>
    <location>
        <position position="125"/>
    </location>
</feature>
<feature type="mutagenesis site" description="Decreased alkylhydroperoxide reductase activity. No effect on the ability to inhibit the TORC1 signaling pathway." evidence="16">
    <original>Y</original>
    <variation>F</variation>
    <location>
        <position position="127"/>
    </location>
</feature>
<feature type="mutagenesis site" description="No effect on the ability to inhibit the TORC1 signaling pathway; when associated with E-113." evidence="16">
    <original>L</original>
    <variation>C</variation>
    <location>
        <position position="128"/>
    </location>
</feature>
<feature type="mutagenesis site" description="Decreased alkylhydroperoxide reductase activity. No effect on the ability to inhibit the TORC1 signaling pathway." evidence="16">
    <original>H</original>
    <variation>A</variation>
    <location>
        <position position="132"/>
    </location>
</feature>
<feature type="mutagenesis site" description="Abolished 'Lys-63'-linked ubiquitination by RNF167." evidence="18">
    <original>K</original>
    <variation>A</variation>
    <location>
        <position position="175"/>
    </location>
</feature>
<feature type="mutagenesis site" description="Loss of interaction with GATOR2. No effect on leucine-binding. Unable to mediate leucine-induced inhibition of the TORC1 signaling pathway." evidence="14 20">
    <original>S</original>
    <variation>W</variation>
    <location>
        <position position="190"/>
    </location>
</feature>
<feature type="mutagenesis site" description="No effect on alkylhydroperoxide reductase activity. No effect on the ability to inhibit the TORC1 signaling pathway." evidence="16">
    <original>C</original>
    <variation>S</variation>
    <location>
        <position position="204"/>
    </location>
</feature>
<feature type="mutagenesis site" description="No effect on alkylhydroperoxide reductase activity." evidence="16">
    <original>C</original>
    <variation>S</variation>
    <location>
        <position position="214"/>
    </location>
</feature>
<feature type="mutagenesis site" description="No effect on the ability to inhibit the TORC1 signaling pathway; when associated with L-259 and R-261." evidence="16">
    <original>V</original>
    <variation>R</variation>
    <location>
        <position position="258"/>
    </location>
</feature>
<feature type="mutagenesis site" description="No effect on the ability to inhibit the TORC1 signaling pathway; when associated with R-258 and R-261." evidence="16">
    <original>E</original>
    <variation>L</variation>
    <location>
        <position position="259"/>
    </location>
</feature>
<feature type="mutagenesis site" description="Decreased leucine-binding. Promotes interaction with RNF167." evidence="14 18 20">
    <original>L</original>
    <variation>A</variation>
    <location>
        <position position="261"/>
    </location>
</feature>
<feature type="mutagenesis site" description="No effect on the ability to inhibit the TORC1 signaling pathway; when associated with R-258 and L-259." evidence="16">
    <original>L</original>
    <variation>R</variation>
    <location>
        <position position="261"/>
    </location>
</feature>
<feature type="mutagenesis site" description="No effect on the ability to inhibit the TORC1 signaling pathway." evidence="16">
    <original>MER</original>
    <variation>LMM</variation>
    <location>
        <begin position="262"/>
        <end position="264"/>
    </location>
</feature>
<feature type="mutagenesis site" description="No effect on the ability to inhibit the TORC1 signaling pathway." evidence="16">
    <original>R</original>
    <variation>P</variation>
    <location>
        <position position="264"/>
    </location>
</feature>
<feature type="mutagenesis site" description="No effect on ability to decrease intracellular reactive oxygen species." evidence="5">
    <original>C</original>
    <variation>S</variation>
    <location>
        <position position="314"/>
    </location>
</feature>
<feature type="mutagenesis site" description="No effect on the ability to inhibit the TORC1 signaling pathway." evidence="16">
    <original>TF</original>
    <variation>AA</variation>
    <location>
        <begin position="336"/>
        <end position="337"/>
    </location>
</feature>
<feature type="mutagenesis site" description="No effect on the ability to inhibit the TORC1 signaling pathway." evidence="16">
    <original>QD</original>
    <variation>AA</variation>
    <location>
        <begin position="340"/>
        <end position="341"/>
    </location>
</feature>
<feature type="mutagenesis site" description="No effect on the ability to inhibit the TORC1 signaling pathway; when associated with A-376." evidence="16">
    <original>L</original>
    <variation>A</variation>
    <location>
        <position position="373"/>
    </location>
</feature>
<feature type="mutagenesis site" description="Loss of leucine-binding. Constitutively interacts with the GATOR2 complex." evidence="15">
    <original>T</original>
    <variation>A</variation>
    <location>
        <position position="374"/>
    </location>
</feature>
<feature type="mutagenesis site" description="Loss of leucine-binding." evidence="15">
    <original>Y</original>
    <variation>A</variation>
    <location>
        <position position="375"/>
    </location>
</feature>
<feature type="mutagenesis site" description="No effect on the ability to inhibit the TORC1 signaling pathway; when associated with A-373." evidence="16">
    <original>N</original>
    <variation>A</variation>
    <location>
        <position position="376"/>
    </location>
</feature>
<feature type="mutagenesis site" description="No effect on the ability to inhibit the TORC1 signaling pathway; when associated with A-387." evidence="16">
    <original>D</original>
    <variation>A</variation>
    <location>
        <position position="385"/>
    </location>
</feature>
<feature type="mutagenesis site" description="Loss of leucine-binding. Constitutively interacts with the GATOR2 complex." evidence="15">
    <original>T</original>
    <variation>A</variation>
    <location>
        <position position="386"/>
    </location>
</feature>
<feature type="mutagenesis site" description="No effect on the ability to inhibit the TORC1 signaling pathway; when associated with A-385." evidence="16">
    <original>S</original>
    <variation>A</variation>
    <location>
        <position position="387"/>
    </location>
</feature>
<feature type="mutagenesis site" description="Loss of leucine-binding. Promotes interaction with RNF167. Constitutively interacts with the GATOR2 complex." evidence="15 18">
    <original>R</original>
    <variation>A</variation>
    <location>
        <position position="390"/>
    </location>
</feature>
<feature type="mutagenesis site" description="No effect on alkylhydroperoxide reductase activity. Altered ability to decrease intracellular reactive oxygen species. No effect on the ability to inhibit the TORC1 signaling pathway." evidence="5 16">
    <original>C</original>
    <variation>S</variation>
    <location>
        <position position="399"/>
    </location>
</feature>
<feature type="mutagenesis site" description="Loss of interaction with the GATOR2 complex. No effect on leucine-binding." evidence="15 18">
    <original>DD</original>
    <variation>AA</variation>
    <location>
        <begin position="406"/>
        <end position="407"/>
    </location>
</feature>
<feature type="mutagenesis site" description="No effect on alkylhydroperoxide reductase activity. Loss of interaction with the GATOR2 complex. Unable to inhibit the TORC1 signaling pathway." evidence="16">
    <original>D</original>
    <variation>A</variation>
    <location>
        <position position="406"/>
    </location>
</feature>
<feature type="mutagenesis site" description="No effect on alkylhydroperoxide reductase activity. Loss of interaction with the GATOR2 complex. Unable to inhibit the TORC1 signaling pathway." evidence="16">
    <original>D</original>
    <variation>A</variation>
    <location>
        <position position="407"/>
    </location>
</feature>
<feature type="mutagenesis site" description="No effect on the ability to inhibit the TORC1 signaling pathway; when associated with A-411 and A-415." evidence="16">
    <original>D</original>
    <variation>A</variation>
    <location>
        <position position="409"/>
    </location>
</feature>
<feature type="mutagenesis site" description="No effect on the ability to inhibit the TORC1 signaling pathway; when associated with A-409 and A-415." evidence="16">
    <original>G</original>
    <variation>A</variation>
    <location>
        <position position="411"/>
    </location>
</feature>
<feature type="mutagenesis site" description="No effect on the ability to inhibit the TORC1 signaling pathway; when associated with A-409 and A-411." evidence="16">
    <original>Q</original>
    <variation>A</variation>
    <location>
        <position position="415"/>
    </location>
</feature>
<feature type="mutagenesis site" description="No effect on the ability to inhibit the TORC1 signaling pathway; when associated with A-422 and A-426." evidence="16">
    <original>R</original>
    <variation>A</variation>
    <location>
        <position position="419"/>
    </location>
</feature>
<feature type="mutagenesis site" description="No effect on the ability to inhibit the TORC1 signaling pathway; when associated with A-419 and A-426." evidence="16">
    <original>K</original>
    <variation>A</variation>
    <location>
        <position position="422"/>
    </location>
</feature>
<feature type="mutagenesis site" description="No effect on the ability to inhibit the TORC1 signaling pathway; when associated with A-419 and A-422." evidence="16">
    <original>K</original>
    <variation>A</variation>
    <location>
        <position position="426"/>
    </location>
</feature>
<feature type="mutagenesis site" description="No effect on alkylhydroperoxide reductase activity. Altered ability to decrease intracellular reactive oxygen species. No effect on the ability to inhibit the TORC1 signaling pathway." evidence="5 16">
    <original>C</original>
    <variation>S</variation>
    <location>
        <position position="430"/>
    </location>
</feature>
<feature type="mutagenesis site" description="Loss of leucine-binding." evidence="15">
    <original>W</original>
    <variation>E</variation>
    <location>
        <position position="444"/>
    </location>
</feature>
<feature type="mutagenesis site" description="Decreased affinity for leucine. Requires increased leucine concentration to dissociate from GATOR2 and activate TORC1 signaling." evidence="15">
    <original>W</original>
    <variation>L</variation>
    <location>
        <position position="444"/>
    </location>
</feature>
<feature type="mutagenesis site" description="Decreased leucine-binding." evidence="14">
    <original>E</original>
    <variation>A</variation>
    <location>
        <position position="451"/>
    </location>
</feature>
<feature type="mutagenesis site" description="Loss of leucine-binding. Constitutively interacts with the GATOR2 complex." evidence="15">
    <original>E</original>
    <variation>Q</variation>
    <location>
        <position position="451"/>
    </location>
</feature>
<feature type="helix" evidence="31">
    <location>
        <begin position="68"/>
        <end position="71"/>
    </location>
</feature>
<feature type="turn" evidence="31">
    <location>
        <begin position="72"/>
        <end position="74"/>
    </location>
</feature>
<feature type="helix" evidence="31">
    <location>
        <begin position="78"/>
        <end position="83"/>
    </location>
</feature>
<feature type="helix" evidence="31">
    <location>
        <begin position="87"/>
        <end position="102"/>
    </location>
</feature>
<feature type="strand" evidence="33">
    <location>
        <begin position="105"/>
        <end position="107"/>
    </location>
</feature>
<feature type="helix" evidence="31">
    <location>
        <begin position="109"/>
        <end position="121"/>
    </location>
</feature>
<feature type="turn" evidence="31">
    <location>
        <begin position="122"/>
        <end position="124"/>
    </location>
</feature>
<feature type="helix" evidence="31">
    <location>
        <begin position="126"/>
        <end position="138"/>
    </location>
</feature>
<feature type="helix" evidence="31">
    <location>
        <begin position="143"/>
        <end position="147"/>
    </location>
</feature>
<feature type="helix" evidence="31">
    <location>
        <begin position="149"/>
        <end position="151"/>
    </location>
</feature>
<feature type="helix" evidence="31">
    <location>
        <begin position="154"/>
        <end position="157"/>
    </location>
</feature>
<feature type="helix" evidence="31">
    <location>
        <begin position="160"/>
        <end position="168"/>
    </location>
</feature>
<feature type="helix" evidence="31">
    <location>
        <begin position="170"/>
        <end position="172"/>
    </location>
</feature>
<feature type="helix" evidence="31">
    <location>
        <begin position="175"/>
        <end position="182"/>
    </location>
</feature>
<feature type="strand" evidence="31">
    <location>
        <begin position="185"/>
        <end position="187"/>
    </location>
</feature>
<feature type="helix" evidence="31">
    <location>
        <begin position="191"/>
        <end position="213"/>
    </location>
</feature>
<feature type="strand" evidence="30">
    <location>
        <begin position="228"/>
        <end position="230"/>
    </location>
</feature>
<feature type="strand" evidence="31">
    <location>
        <begin position="235"/>
        <end position="237"/>
    </location>
</feature>
<feature type="helix" evidence="31">
    <location>
        <begin position="257"/>
        <end position="270"/>
    </location>
</feature>
<feature type="helix" evidence="31">
    <location>
        <begin position="283"/>
        <end position="292"/>
    </location>
</feature>
<feature type="helix" evidence="31">
    <location>
        <begin position="313"/>
        <end position="315"/>
    </location>
</feature>
<feature type="strand" evidence="31">
    <location>
        <begin position="328"/>
        <end position="330"/>
    </location>
</feature>
<feature type="helix" evidence="31">
    <location>
        <begin position="339"/>
        <end position="341"/>
    </location>
</feature>
<feature type="turn" evidence="31">
    <location>
        <begin position="344"/>
        <end position="347"/>
    </location>
</feature>
<feature type="helix" evidence="31">
    <location>
        <begin position="348"/>
        <end position="355"/>
    </location>
</feature>
<feature type="helix" evidence="31">
    <location>
        <begin position="357"/>
        <end position="371"/>
    </location>
</feature>
<feature type="strand" evidence="32">
    <location>
        <begin position="376"/>
        <end position="378"/>
    </location>
</feature>
<feature type="strand" evidence="32">
    <location>
        <begin position="381"/>
        <end position="383"/>
    </location>
</feature>
<feature type="helix" evidence="31">
    <location>
        <begin position="387"/>
        <end position="400"/>
    </location>
</feature>
<feature type="helix" evidence="31">
    <location>
        <begin position="411"/>
        <end position="416"/>
    </location>
</feature>
<feature type="helix" evidence="31">
    <location>
        <begin position="419"/>
        <end position="430"/>
    </location>
</feature>
<feature type="helix" evidence="31">
    <location>
        <begin position="432"/>
        <end position="434"/>
    </location>
</feature>
<feature type="helix" evidence="31">
    <location>
        <begin position="437"/>
        <end position="442"/>
    </location>
</feature>
<feature type="helix" evidence="31">
    <location>
        <begin position="449"/>
        <end position="479"/>
    </location>
</feature>
<protein>
    <recommendedName>
        <fullName evidence="23">Sestrin-2</fullName>
        <ecNumber evidence="24">1.11.1.-</ecNumber>
    </recommendedName>
    <alternativeName>
        <fullName evidence="21">Hypoxia-induced gene</fullName>
    </alternativeName>
</protein>
<gene>
    <name evidence="25" type="primary">SESN2</name>
    <name evidence="21" type="synonym">Hi95</name>
    <name evidence="22" type="synonym">SEST2</name>
</gene>
<keyword id="KW-0002">3D-structure</keyword>
<keyword id="KW-0007">Acetylation</keyword>
<keyword id="KW-0963">Cytoplasm</keyword>
<keyword id="KW-1017">Isopeptide bond</keyword>
<keyword id="KW-0560">Oxidoreductase</keyword>
<keyword id="KW-0597">Phosphoprotein</keyword>
<keyword id="KW-1267">Proteomics identification</keyword>
<keyword id="KW-1185">Reference proteome</keyword>
<keyword id="KW-0832">Ubl conjugation</keyword>
<proteinExistence type="evidence at protein level"/>
<comment type="function">
    <text evidence="5 6 7 8 9 12 13 14 15 16 18 19 20">Functions as an intracellular leucine sensor that negatively regulates the mTORC1 signaling pathway through the GATOR complex (PubMed:18692468, PubMed:25263562, PubMed:25457612, PubMed:26449471, PubMed:26586190, PubMed:26612684, PubMed:31586034, PubMed:35114100, PubMed:35831510, PubMed:36528027). In absence of leucine, binds the GATOR subcomplex GATOR2 and prevents mTORC1 signaling (PubMed:18692468, PubMed:25263562, PubMed:25457612, PubMed:26449471, PubMed:26586190, PubMed:26612684, PubMed:31586034, PubMed:35114100, PubMed:35831510, PubMed:36528027). Binding of leucine to SESN2 disrupts its interaction with GATOR2 thereby activating the TORC1 signaling pathway (PubMed:26449471, PubMed:26586190, PubMed:35114100, PubMed:35831510, PubMed:36528027). This stress-inducible metabolic regulator also plays a role in protection against oxidative and genotoxic stresses. May negatively regulate protein translation in response to endoplasmic reticulum stress, via mTORC1 (PubMed:24947615). May positively regulate the transcription by NFE2L2 of genes involved in the response to oxidative stress by facilitating the SQSTM1-mediated autophagic degradation of KEAP1 (PubMed:23274085). May also mediate TP53 inhibition of TORC1 signaling upon genotoxic stress (PubMed:18692468). Moreover, may prevent the accumulation of reactive oxygen species (ROS) through the alkylhydroperoxide reductase activity born by the N-terminal domain of the protein (PubMed:26612684). Was originally reported to contribute to oxidative stress resistance by reducing PRDX1 (PubMed:15105503). However, this could not be confirmed (PubMed:19113821).</text>
</comment>
<comment type="catalytic activity">
    <reaction evidence="16">
        <text>a hydroperoxide + L-cysteinyl-[protein] = S-hydroxy-L-cysteinyl-[protein] + an alcohol</text>
        <dbReference type="Rhea" id="RHEA:67124"/>
        <dbReference type="Rhea" id="RHEA-COMP:10131"/>
        <dbReference type="Rhea" id="RHEA-COMP:17193"/>
        <dbReference type="ChEBI" id="CHEBI:29950"/>
        <dbReference type="ChEBI" id="CHEBI:30879"/>
        <dbReference type="ChEBI" id="CHEBI:35924"/>
        <dbReference type="ChEBI" id="CHEBI:61973"/>
    </reaction>
    <physiologicalReaction direction="left-to-right" evidence="24">
        <dbReference type="Rhea" id="RHEA:67125"/>
    </physiologicalReaction>
</comment>
<comment type="subunit">
    <text evidence="1 5 6 8 10 11 12 13 14 18 19 20">Interacts with the GATOR2 complex which is composed of MIOS, SEC13, SEH1L, WDR24 and WDR59; the interaction is negatively regulated by leucine (PubMed:25263562, PubMed:25457612, PubMed:26449471, PubMed:35114100, PubMed:35831510, PubMed:36528027). Conveys leucine availability via direct interaction with SEH1L and WDR24 components of the GATOR2 complex (PubMed:35831510, PubMed:36528027). Interacts with RRAGA, RRAGB, RRAGC and RRAGD; may function as a guanine nucleotide dissociation inhibitor for RRAGs and regulate them (PubMed:25259925). May interact with the TORC2 complex (By similarity). Interacts with KEAP1, RBX1, SQSTM and ULK1; to regulate the degradation of KEAP1 (PubMed:23274085, PubMed:25040165). May also associate with the complex composed of TSC1, TSC2 and the AMP-responsive protein kinase/AMPK to regulate TORC1 signaling (PubMed:18692468). May interact with PRDX1 (PubMed:15105503).</text>
</comment>
<comment type="interaction">
    <interactant intactId="EBI-3939642">
        <id>P58004</id>
    </interactant>
    <interactant intactId="EBI-751001">
        <id>Q14145</id>
        <label>KEAP1</label>
    </interactant>
    <organismsDiffer>false</organismsDiffer>
    <experiments>3</experiments>
</comment>
<comment type="interaction">
    <interactant intactId="EBI-3939642">
        <id>P58004</id>
    </interactant>
    <interactant intactId="EBI-2515122">
        <id>Q9NXC5</id>
        <label>MIOS</label>
    </interactant>
    <organismsDiffer>false</organismsDiffer>
    <experiments>5</experiments>
</comment>
<comment type="interaction">
    <interactant intactId="EBI-3939642">
        <id>P58004</id>
    </interactant>
    <interactant intactId="EBI-398523">
        <id>P62877</id>
        <label>RBX1</label>
    </interactant>
    <organismsDiffer>false</organismsDiffer>
    <experiments>3</experiments>
</comment>
<comment type="interaction">
    <interactant intactId="EBI-3939642">
        <id>P58004</id>
    </interactant>
    <interactant intactId="EBI-307104">
        <id>Q13501</id>
        <label>SQSTM1</label>
    </interactant>
    <organismsDiffer>false</organismsDiffer>
    <experiments>9</experiments>
</comment>
<comment type="interaction">
    <interactant intactId="EBI-3939642">
        <id>P58004</id>
    </interactant>
    <interactant intactId="EBI-746424">
        <id>Q96S15</id>
        <label>WDR24</label>
    </interactant>
    <organismsDiffer>false</organismsDiffer>
    <experiments>18</experiments>
</comment>
<comment type="interaction">
    <interactant intactId="EBI-3939642">
        <id>P58004</id>
    </interactant>
    <interactant intactId="EBI-2507414">
        <id>P62878</id>
        <label>Rbx1</label>
    </interactant>
    <organismsDiffer>true</organismsDiffer>
    <experiments>3</experiments>
</comment>
<comment type="interaction">
    <interactant intactId="EBI-3939642">
        <id>P58004</id>
    </interactant>
    <interactant intactId="EBI-8390771">
        <id>O70405</id>
        <label>Ulk1</label>
    </interactant>
    <organismsDiffer>true</organismsDiffer>
    <experiments>5</experiments>
</comment>
<comment type="subcellular location">
    <subcellularLocation>
        <location evidence="5">Cytoplasm</location>
    </subcellularLocation>
</comment>
<comment type="tissue specificity">
    <text evidence="4">Widely expressed.</text>
</comment>
<comment type="induction">
    <text evidence="3 9">Up-regulated by hypoxia and DNA damage (PubMed:12203114). Up-regulated by treatments inducing endoplasmic reticulum stress (PubMed:24947615).</text>
</comment>
<comment type="domain">
    <text evidence="16">The N-terminal domain has an alkylhydroperoxide reductase activity.</text>
</comment>
<comment type="domain">
    <text evidence="16">The C-terminal domain mediates interaction with GATOR2 through which it regulates TORC1 signaling.</text>
</comment>
<comment type="PTM">
    <text evidence="10">Phosphorylated by ULK1 at multiple sites.</text>
</comment>
<comment type="PTM">
    <text evidence="17 18">Ubiquitinated at Lys-175 by RNF167 via 'Lys-63'-linked polyubiquitination in response to leucine deprivation: ubiquitination promotes SESN2-interaction with the GATOR2 complex, leading to inhibit the TORC1 signaling pathway (PubMed:35114100). Deubiquitinated at Lys-175 by STAMBPL1, promoting the TORC1 signaling pathway (PubMed:35114100). Ubiquitinated by RNF186; ubiquitination mediates proteasomal degradation (PubMed:31586034).</text>
</comment>
<comment type="similarity">
    <text evidence="23">Belongs to the sestrin family.</text>
</comment>
<comment type="sequence caution" evidence="23">
    <conflict type="erroneous initiation">
        <sequence resource="EMBL-CDS" id="BAB55438"/>
    </conflict>
</comment>
<dbReference type="EC" id="1.11.1.-" evidence="24"/>
<dbReference type="EMBL" id="AY123223">
    <property type="protein sequence ID" value="AAM92261.1"/>
    <property type="molecule type" value="mRNA"/>
</dbReference>
<dbReference type="EMBL" id="AL136551">
    <property type="protein sequence ID" value="CAB66486.1"/>
    <property type="molecule type" value="mRNA"/>
</dbReference>
<dbReference type="EMBL" id="AK027896">
    <property type="protein sequence ID" value="BAB55438.1"/>
    <property type="status" value="ALT_INIT"/>
    <property type="molecule type" value="mRNA"/>
</dbReference>
<dbReference type="EMBL" id="AK025640">
    <property type="status" value="NOT_ANNOTATED_CDS"/>
    <property type="molecule type" value="mRNA"/>
</dbReference>
<dbReference type="EMBL" id="AK315710">
    <property type="protein sequence ID" value="BAG38070.1"/>
    <property type="molecule type" value="mRNA"/>
</dbReference>
<dbReference type="EMBL" id="AL353622">
    <property type="status" value="NOT_ANNOTATED_CDS"/>
    <property type="molecule type" value="Genomic_DNA"/>
</dbReference>
<dbReference type="EMBL" id="CH471059">
    <property type="protein sequence ID" value="EAX07703.1"/>
    <property type="molecule type" value="Genomic_DNA"/>
</dbReference>
<dbReference type="EMBL" id="BC013304">
    <property type="protein sequence ID" value="AAH13304.1"/>
    <property type="molecule type" value="mRNA"/>
</dbReference>
<dbReference type="EMBL" id="BC033719">
    <property type="protein sequence ID" value="AAH33719.1"/>
    <property type="molecule type" value="mRNA"/>
</dbReference>
<dbReference type="CCDS" id="CCDS321.1"/>
<dbReference type="RefSeq" id="NP_113647.1">
    <property type="nucleotide sequence ID" value="NM_031459.5"/>
</dbReference>
<dbReference type="PDB" id="5CUF">
    <property type="method" value="X-ray"/>
    <property type="resolution" value="3.50 A"/>
    <property type="chains" value="A/B/C/D/E=1-480"/>
</dbReference>
<dbReference type="PDB" id="5DJ4">
    <property type="method" value="X-ray"/>
    <property type="resolution" value="2.70 A"/>
    <property type="chains" value="A/B/C/D/E=1-480"/>
</dbReference>
<dbReference type="PDB" id="5T0N">
    <property type="method" value="X-ray"/>
    <property type="resolution" value="3.00 A"/>
    <property type="chains" value="A/B/C/D/E=1-480"/>
</dbReference>
<dbReference type="PDB" id="6N0M">
    <property type="method" value="X-ray"/>
    <property type="resolution" value="3.30 A"/>
    <property type="chains" value="A/B/C/D/E=66-480"/>
</dbReference>
<dbReference type="PDBsum" id="5CUF"/>
<dbReference type="PDBsum" id="5DJ4"/>
<dbReference type="PDBsum" id="5T0N"/>
<dbReference type="PDBsum" id="6N0M"/>
<dbReference type="SMR" id="P58004"/>
<dbReference type="BioGRID" id="123724">
    <property type="interactions" value="41"/>
</dbReference>
<dbReference type="DIP" id="DIP-62044N"/>
<dbReference type="FunCoup" id="P58004">
    <property type="interactions" value="613"/>
</dbReference>
<dbReference type="IntAct" id="P58004">
    <property type="interactions" value="24"/>
</dbReference>
<dbReference type="MINT" id="P58004"/>
<dbReference type="STRING" id="9606.ENSP00000253063"/>
<dbReference type="GlyGen" id="P58004">
    <property type="glycosylation" value="2 sites, 1 O-linked glycan (1 site)"/>
</dbReference>
<dbReference type="iPTMnet" id="P58004"/>
<dbReference type="PhosphoSitePlus" id="P58004"/>
<dbReference type="BioMuta" id="SESN2"/>
<dbReference type="DMDM" id="13633882"/>
<dbReference type="jPOST" id="P58004"/>
<dbReference type="MassIVE" id="P58004"/>
<dbReference type="PaxDb" id="9606-ENSP00000253063"/>
<dbReference type="PeptideAtlas" id="P58004"/>
<dbReference type="ProteomicsDB" id="57043"/>
<dbReference type="Pumba" id="P58004"/>
<dbReference type="Antibodypedia" id="2971">
    <property type="antibodies" value="287 antibodies from 34 providers"/>
</dbReference>
<dbReference type="DNASU" id="83667"/>
<dbReference type="Ensembl" id="ENST00000253063.4">
    <property type="protein sequence ID" value="ENSP00000253063.3"/>
    <property type="gene ID" value="ENSG00000130766.5"/>
</dbReference>
<dbReference type="Ensembl" id="ENST00000645231.2">
    <property type="protein sequence ID" value="ENSP00000496365.1"/>
    <property type="gene ID" value="ENSG00000285069.2"/>
</dbReference>
<dbReference type="GeneID" id="83667"/>
<dbReference type="KEGG" id="hsa:83667"/>
<dbReference type="MANE-Select" id="ENST00000253063.4">
    <property type="protein sequence ID" value="ENSP00000253063.3"/>
    <property type="RefSeq nucleotide sequence ID" value="NM_031459.5"/>
    <property type="RefSeq protein sequence ID" value="NP_113647.1"/>
</dbReference>
<dbReference type="UCSC" id="uc001bps.4">
    <property type="organism name" value="human"/>
</dbReference>
<dbReference type="AGR" id="HGNC:20746"/>
<dbReference type="CTD" id="83667"/>
<dbReference type="DisGeNET" id="83667"/>
<dbReference type="GeneCards" id="SESN2"/>
<dbReference type="HGNC" id="HGNC:20746">
    <property type="gene designation" value="SESN2"/>
</dbReference>
<dbReference type="HPA" id="ENSG00000130766">
    <property type="expression patterns" value="Low tissue specificity"/>
</dbReference>
<dbReference type="MalaCards" id="SESN2"/>
<dbReference type="MIM" id="607767">
    <property type="type" value="gene"/>
</dbReference>
<dbReference type="neXtProt" id="NX_P58004"/>
<dbReference type="OpenTargets" id="ENSG00000130766"/>
<dbReference type="PharmGKB" id="PA134882791"/>
<dbReference type="VEuPathDB" id="HostDB:ENSG00000130766"/>
<dbReference type="eggNOG" id="KOG3746">
    <property type="taxonomic scope" value="Eukaryota"/>
</dbReference>
<dbReference type="GeneTree" id="ENSGT00950000183168"/>
<dbReference type="HOGENOM" id="CLU_020429_0_0_1"/>
<dbReference type="InParanoid" id="P58004"/>
<dbReference type="OMA" id="HAIIVLC"/>
<dbReference type="OrthoDB" id="337464at2759"/>
<dbReference type="PAN-GO" id="P58004">
    <property type="GO annotations" value="6 GO annotations based on evolutionary models"/>
</dbReference>
<dbReference type="PhylomeDB" id="P58004"/>
<dbReference type="TreeFam" id="TF314230"/>
<dbReference type="PathwayCommons" id="P58004"/>
<dbReference type="Reactome" id="R-HSA-5628897">
    <property type="pathway name" value="TP53 Regulates Metabolic Genes"/>
</dbReference>
<dbReference type="Reactome" id="R-HSA-9639288">
    <property type="pathway name" value="Amino acids regulate mTORC1"/>
</dbReference>
<dbReference type="Reactome" id="R-HSA-9755511">
    <property type="pathway name" value="KEAP1-NFE2L2 pathway"/>
</dbReference>
<dbReference type="SignaLink" id="P58004"/>
<dbReference type="SIGNOR" id="P58004"/>
<dbReference type="BioGRID-ORCS" id="83667">
    <property type="hits" value="25 hits in 1170 CRISPR screens"/>
</dbReference>
<dbReference type="ChiTaRS" id="SESN2">
    <property type="organism name" value="human"/>
</dbReference>
<dbReference type="EvolutionaryTrace" id="P58004"/>
<dbReference type="GeneWiki" id="SESN2"/>
<dbReference type="GenomeRNAi" id="83667"/>
<dbReference type="Pharos" id="P58004">
    <property type="development level" value="Tbio"/>
</dbReference>
<dbReference type="PRO" id="PR:P58004"/>
<dbReference type="Proteomes" id="UP000005640">
    <property type="component" value="Chromosome 1"/>
</dbReference>
<dbReference type="RNAct" id="P58004">
    <property type="molecule type" value="protein"/>
</dbReference>
<dbReference type="Bgee" id="ENSG00000130766">
    <property type="expression patterns" value="Expressed in lower esophagus mucosa and 99 other cell types or tissues"/>
</dbReference>
<dbReference type="GO" id="GO:1990316">
    <property type="term" value="C:Atg1/ULK1 kinase complex"/>
    <property type="evidence" value="ECO:0000353"/>
    <property type="project" value="UniProtKB"/>
</dbReference>
<dbReference type="GO" id="GO:0005737">
    <property type="term" value="C:cytoplasm"/>
    <property type="evidence" value="ECO:0000314"/>
    <property type="project" value="UniProtKB"/>
</dbReference>
<dbReference type="GO" id="GO:0005829">
    <property type="term" value="C:cytosol"/>
    <property type="evidence" value="ECO:0000304"/>
    <property type="project" value="Reactome"/>
</dbReference>
<dbReference type="GO" id="GO:0005765">
    <property type="term" value="C:lysosomal membrane"/>
    <property type="evidence" value="ECO:0000314"/>
    <property type="project" value="UniProt"/>
</dbReference>
<dbReference type="GO" id="GO:0005739">
    <property type="term" value="C:mitochondrion"/>
    <property type="evidence" value="ECO:0007669"/>
    <property type="project" value="GOC"/>
</dbReference>
<dbReference type="GO" id="GO:0031588">
    <property type="term" value="C:nucleotide-activated protein kinase complex"/>
    <property type="evidence" value="ECO:0007669"/>
    <property type="project" value="Ensembl"/>
</dbReference>
<dbReference type="GO" id="GO:0005634">
    <property type="term" value="C:nucleus"/>
    <property type="evidence" value="ECO:0007669"/>
    <property type="project" value="InterPro"/>
</dbReference>
<dbReference type="GO" id="GO:0031932">
    <property type="term" value="C:TORC2 complex"/>
    <property type="evidence" value="ECO:0007669"/>
    <property type="project" value="Ensembl"/>
</dbReference>
<dbReference type="GO" id="GO:0005092">
    <property type="term" value="F:GDP-dissociation inhibitor activity"/>
    <property type="evidence" value="ECO:0007669"/>
    <property type="project" value="Ensembl"/>
</dbReference>
<dbReference type="GO" id="GO:0070728">
    <property type="term" value="F:L-leucine binding"/>
    <property type="evidence" value="ECO:0000314"/>
    <property type="project" value="UniProtKB"/>
</dbReference>
<dbReference type="GO" id="GO:0016684">
    <property type="term" value="F:oxidoreductase activity, acting on peroxide as acceptor"/>
    <property type="evidence" value="ECO:0000318"/>
    <property type="project" value="GO_Central"/>
</dbReference>
<dbReference type="GO" id="GO:0004601">
    <property type="term" value="F:peroxidase activity"/>
    <property type="evidence" value="ECO:0000314"/>
    <property type="project" value="UniProtKB"/>
</dbReference>
<dbReference type="GO" id="GO:0042731">
    <property type="term" value="F:PH domain binding"/>
    <property type="evidence" value="ECO:0007669"/>
    <property type="project" value="Ensembl"/>
</dbReference>
<dbReference type="GO" id="GO:0140311">
    <property type="term" value="F:protein sequestering activity"/>
    <property type="evidence" value="ECO:0000314"/>
    <property type="project" value="UniProtKB"/>
</dbReference>
<dbReference type="GO" id="GO:0044877">
    <property type="term" value="F:protein-containing complex binding"/>
    <property type="evidence" value="ECO:0000353"/>
    <property type="project" value="UniProtKB"/>
</dbReference>
<dbReference type="GO" id="GO:0032542">
    <property type="term" value="F:sulfiredoxin activity"/>
    <property type="evidence" value="ECO:0000314"/>
    <property type="project" value="UniProtKB"/>
</dbReference>
<dbReference type="GO" id="GO:0098869">
    <property type="term" value="P:cellular oxidant detoxification"/>
    <property type="evidence" value="ECO:0000314"/>
    <property type="project" value="UniProtKB"/>
</dbReference>
<dbReference type="GO" id="GO:0034198">
    <property type="term" value="P:cellular response to amino acid starvation"/>
    <property type="evidence" value="ECO:0000315"/>
    <property type="project" value="UniProtKB"/>
</dbReference>
<dbReference type="GO" id="GO:0071230">
    <property type="term" value="P:cellular response to amino acid stimulus"/>
    <property type="evidence" value="ECO:0000315"/>
    <property type="project" value="UniProtKB"/>
</dbReference>
<dbReference type="GO" id="GO:0042149">
    <property type="term" value="P:cellular response to glucose starvation"/>
    <property type="evidence" value="ECO:0000315"/>
    <property type="project" value="UniProtKB"/>
</dbReference>
<dbReference type="GO" id="GO:0071233">
    <property type="term" value="P:cellular response to L-leucine"/>
    <property type="evidence" value="ECO:0000314"/>
    <property type="project" value="UniProt"/>
</dbReference>
<dbReference type="GO" id="GO:1990253">
    <property type="term" value="P:cellular response to leucine starvation"/>
    <property type="evidence" value="ECO:0000314"/>
    <property type="project" value="UniProt"/>
</dbReference>
<dbReference type="GO" id="GO:0034599">
    <property type="term" value="P:cellular response to oxidative stress"/>
    <property type="evidence" value="ECO:0000250"/>
    <property type="project" value="UniProtKB"/>
</dbReference>
<dbReference type="GO" id="GO:0046323">
    <property type="term" value="P:D-glucose import"/>
    <property type="evidence" value="ECO:0007669"/>
    <property type="project" value="Ensembl"/>
</dbReference>
<dbReference type="GO" id="GO:0030330">
    <property type="term" value="P:DNA damage response, signal transduction by p53 class mediator"/>
    <property type="evidence" value="ECO:0000315"/>
    <property type="project" value="UniProtKB"/>
</dbReference>
<dbReference type="GO" id="GO:0006635">
    <property type="term" value="P:fatty acid beta-oxidation"/>
    <property type="evidence" value="ECO:0007669"/>
    <property type="project" value="Ensembl"/>
</dbReference>
<dbReference type="GO" id="GO:0042593">
    <property type="term" value="P:glucose homeostasis"/>
    <property type="evidence" value="ECO:0007669"/>
    <property type="project" value="Ensembl"/>
</dbReference>
<dbReference type="GO" id="GO:0032042">
    <property type="term" value="P:mitochondrial DNA metabolic process"/>
    <property type="evidence" value="ECO:0007669"/>
    <property type="project" value="Ensembl"/>
</dbReference>
<dbReference type="GO" id="GO:0030308">
    <property type="term" value="P:negative regulation of cell growth"/>
    <property type="evidence" value="ECO:0000250"/>
    <property type="project" value="UniProtKB"/>
</dbReference>
<dbReference type="GO" id="GO:1904262">
    <property type="term" value="P:negative regulation of TORC1 signaling"/>
    <property type="evidence" value="ECO:0000314"/>
    <property type="project" value="UniProt"/>
</dbReference>
<dbReference type="GO" id="GO:1902010">
    <property type="term" value="P:negative regulation of translation in response to endoplasmic reticulum stress"/>
    <property type="evidence" value="ECO:0000315"/>
    <property type="project" value="UniProtKB"/>
</dbReference>
<dbReference type="GO" id="GO:1904504">
    <property type="term" value="P:positive regulation of lipophagy"/>
    <property type="evidence" value="ECO:0007669"/>
    <property type="project" value="Ensembl"/>
</dbReference>
<dbReference type="GO" id="GO:0016239">
    <property type="term" value="P:positive regulation of macroautophagy"/>
    <property type="evidence" value="ECO:0000315"/>
    <property type="project" value="UniProtKB"/>
</dbReference>
<dbReference type="GO" id="GO:0051897">
    <property type="term" value="P:positive regulation of phosphatidylinositol 3-kinase/protein kinase B signal transduction"/>
    <property type="evidence" value="ECO:0007669"/>
    <property type="project" value="Ensembl"/>
</dbReference>
<dbReference type="GO" id="GO:1900182">
    <property type="term" value="P:positive regulation of protein localization to nucleus"/>
    <property type="evidence" value="ECO:0000315"/>
    <property type="project" value="UniProtKB"/>
</dbReference>
<dbReference type="GO" id="GO:1904263">
    <property type="term" value="P:positive regulation of TORC1 signaling"/>
    <property type="evidence" value="ECO:0000314"/>
    <property type="project" value="UniProt"/>
</dbReference>
<dbReference type="GO" id="GO:0072593">
    <property type="term" value="P:reactive oxygen species metabolic process"/>
    <property type="evidence" value="ECO:0000314"/>
    <property type="project" value="UniProtKB"/>
</dbReference>
<dbReference type="GO" id="GO:0141161">
    <property type="term" value="P:regulation of cAMP/PKA signal transduction"/>
    <property type="evidence" value="ECO:0007669"/>
    <property type="project" value="Ensembl"/>
</dbReference>
<dbReference type="GO" id="GO:0006111">
    <property type="term" value="P:regulation of gluconeogenesis"/>
    <property type="evidence" value="ECO:0007669"/>
    <property type="project" value="Ensembl"/>
</dbReference>
<dbReference type="GO" id="GO:0001932">
    <property type="term" value="P:regulation of protein phosphorylation"/>
    <property type="evidence" value="ECO:0000314"/>
    <property type="project" value="UniProtKB"/>
</dbReference>
<dbReference type="GO" id="GO:1901031">
    <property type="term" value="P:regulation of response to reactive oxygen species"/>
    <property type="evidence" value="ECO:0007669"/>
    <property type="project" value="InterPro"/>
</dbReference>
<dbReference type="GO" id="GO:1903432">
    <property type="term" value="P:regulation of TORC1 signaling"/>
    <property type="evidence" value="ECO:0000314"/>
    <property type="project" value="UniProtKB"/>
</dbReference>
<dbReference type="GO" id="GO:0009749">
    <property type="term" value="P:response to glucose"/>
    <property type="evidence" value="ECO:0007669"/>
    <property type="project" value="Ensembl"/>
</dbReference>
<dbReference type="GO" id="GO:0032868">
    <property type="term" value="P:response to insulin"/>
    <property type="evidence" value="ECO:0007669"/>
    <property type="project" value="Ensembl"/>
</dbReference>
<dbReference type="GO" id="GO:0070328">
    <property type="term" value="P:triglyceride homeostasis"/>
    <property type="evidence" value="ECO:0007669"/>
    <property type="project" value="Ensembl"/>
</dbReference>
<dbReference type="DisProt" id="DP03004"/>
<dbReference type="FunFam" id="1.20.1290.10:FF:000001">
    <property type="entry name" value="Sestrin 1"/>
    <property type="match status" value="1"/>
</dbReference>
<dbReference type="Gene3D" id="1.20.1290.10">
    <property type="entry name" value="AhpD-like"/>
    <property type="match status" value="1"/>
</dbReference>
<dbReference type="InterPro" id="IPR029032">
    <property type="entry name" value="AhpD-like"/>
</dbReference>
<dbReference type="InterPro" id="IPR006730">
    <property type="entry name" value="Sestrin"/>
</dbReference>
<dbReference type="PANTHER" id="PTHR12474">
    <property type="entry name" value="P53 REGULATED PA26 NUCLEAR PROTEIN SESTRIN"/>
    <property type="match status" value="1"/>
</dbReference>
<dbReference type="PANTHER" id="PTHR12474:SF2">
    <property type="entry name" value="SESTRIN-2"/>
    <property type="match status" value="1"/>
</dbReference>
<dbReference type="Pfam" id="PF04636">
    <property type="entry name" value="PA26"/>
    <property type="match status" value="1"/>
</dbReference>
<dbReference type="SUPFAM" id="SSF69118">
    <property type="entry name" value="AhpD-like"/>
    <property type="match status" value="1"/>
</dbReference>
<organism>
    <name type="scientific">Homo sapiens</name>
    <name type="common">Human</name>
    <dbReference type="NCBI Taxonomy" id="9606"/>
    <lineage>
        <taxon>Eukaryota</taxon>
        <taxon>Metazoa</taxon>
        <taxon>Chordata</taxon>
        <taxon>Craniata</taxon>
        <taxon>Vertebrata</taxon>
        <taxon>Euteleostomi</taxon>
        <taxon>Mammalia</taxon>
        <taxon>Eutheria</taxon>
        <taxon>Euarchontoglires</taxon>
        <taxon>Primates</taxon>
        <taxon>Haplorrhini</taxon>
        <taxon>Catarrhini</taxon>
        <taxon>Hominidae</taxon>
        <taxon>Homo</taxon>
    </lineage>
</organism>
<evidence type="ECO:0000250" key="1">
    <source>
        <dbReference type="UniProtKB" id="P58043"/>
    </source>
</evidence>
<evidence type="ECO:0000256" key="2">
    <source>
        <dbReference type="SAM" id="MobiDB-lite"/>
    </source>
</evidence>
<evidence type="ECO:0000269" key="3">
    <source>
    </source>
</evidence>
<evidence type="ECO:0000269" key="4">
    <source>
    </source>
</evidence>
<evidence type="ECO:0000269" key="5">
    <source>
    </source>
</evidence>
<evidence type="ECO:0000269" key="6">
    <source>
    </source>
</evidence>
<evidence type="ECO:0000269" key="7">
    <source>
    </source>
</evidence>
<evidence type="ECO:0000269" key="8">
    <source>
    </source>
</evidence>
<evidence type="ECO:0000269" key="9">
    <source>
    </source>
</evidence>
<evidence type="ECO:0000269" key="10">
    <source>
    </source>
</evidence>
<evidence type="ECO:0000269" key="11">
    <source>
    </source>
</evidence>
<evidence type="ECO:0000269" key="12">
    <source>
    </source>
</evidence>
<evidence type="ECO:0000269" key="13">
    <source>
    </source>
</evidence>
<evidence type="ECO:0000269" key="14">
    <source>
    </source>
</evidence>
<evidence type="ECO:0000269" key="15">
    <source>
    </source>
</evidence>
<evidence type="ECO:0000269" key="16">
    <source>
    </source>
</evidence>
<evidence type="ECO:0000269" key="17">
    <source>
    </source>
</evidence>
<evidence type="ECO:0000269" key="18">
    <source>
    </source>
</evidence>
<evidence type="ECO:0000269" key="19">
    <source>
    </source>
</evidence>
<evidence type="ECO:0000269" key="20">
    <source>
    </source>
</evidence>
<evidence type="ECO:0000303" key="21">
    <source>
    </source>
</evidence>
<evidence type="ECO:0000303" key="22">
    <source>
    </source>
</evidence>
<evidence type="ECO:0000305" key="23"/>
<evidence type="ECO:0000305" key="24">
    <source>
    </source>
</evidence>
<evidence type="ECO:0000312" key="25">
    <source>
        <dbReference type="HGNC" id="HGNC:20746"/>
    </source>
</evidence>
<evidence type="ECO:0007744" key="26">
    <source>
        <dbReference type="PDB" id="5DJ4"/>
    </source>
</evidence>
<evidence type="ECO:0007744" key="27">
    <source>
    </source>
</evidence>
<evidence type="ECO:0007744" key="28">
    <source>
    </source>
</evidence>
<evidence type="ECO:0007744" key="29">
    <source>
    </source>
</evidence>
<evidence type="ECO:0007829" key="30">
    <source>
        <dbReference type="PDB" id="5CUF"/>
    </source>
</evidence>
<evidence type="ECO:0007829" key="31">
    <source>
        <dbReference type="PDB" id="5DJ4"/>
    </source>
</evidence>
<evidence type="ECO:0007829" key="32">
    <source>
        <dbReference type="PDB" id="5T0N"/>
    </source>
</evidence>
<evidence type="ECO:0007829" key="33">
    <source>
        <dbReference type="PDB" id="6N0M"/>
    </source>
</evidence>